<reference key="1">
    <citation type="journal article" date="2005" name="Science">
        <title>Genome streamlining in a cosmopolitan oceanic bacterium.</title>
        <authorList>
            <person name="Giovannoni S.J."/>
            <person name="Tripp H.J."/>
            <person name="Givan S."/>
            <person name="Podar M."/>
            <person name="Vergin K.L."/>
            <person name="Baptista D."/>
            <person name="Bibbs L."/>
            <person name="Eads J."/>
            <person name="Richardson T.H."/>
            <person name="Noordewier M."/>
            <person name="Rappe M.S."/>
            <person name="Short J.M."/>
            <person name="Carrington J.C."/>
            <person name="Mathur E.J."/>
        </authorList>
    </citation>
    <scope>NUCLEOTIDE SEQUENCE [LARGE SCALE GENOMIC DNA]</scope>
    <source>
        <strain>HTCC1062</strain>
    </source>
</reference>
<feature type="chain" id="PRO_0000196955" description="2,3,4,5-tetrahydropyridine-2,6-dicarboxylate N-succinyltransferase">
    <location>
        <begin position="1"/>
        <end position="275"/>
    </location>
</feature>
<feature type="binding site" evidence="1">
    <location>
        <position position="106"/>
    </location>
    <ligand>
        <name>substrate</name>
    </ligand>
</feature>
<feature type="binding site" evidence="1">
    <location>
        <position position="143"/>
    </location>
    <ligand>
        <name>substrate</name>
    </ligand>
</feature>
<name>DAPD_PELUB</name>
<dbReference type="EC" id="2.3.1.117" evidence="1"/>
<dbReference type="EMBL" id="CP000084">
    <property type="protein sequence ID" value="AAZ21285.1"/>
    <property type="molecule type" value="Genomic_DNA"/>
</dbReference>
<dbReference type="RefSeq" id="WP_006997441.1">
    <property type="nucleotide sequence ID" value="NC_007205.1"/>
</dbReference>
<dbReference type="SMR" id="Q4FNF4"/>
<dbReference type="STRING" id="335992.SAR11_0463"/>
<dbReference type="GeneID" id="66294962"/>
<dbReference type="KEGG" id="pub:SAR11_0463"/>
<dbReference type="eggNOG" id="COG2171">
    <property type="taxonomic scope" value="Bacteria"/>
</dbReference>
<dbReference type="HOGENOM" id="CLU_050859_0_1_5"/>
<dbReference type="OrthoDB" id="9775362at2"/>
<dbReference type="UniPathway" id="UPA00034">
    <property type="reaction ID" value="UER00019"/>
</dbReference>
<dbReference type="Proteomes" id="UP000002528">
    <property type="component" value="Chromosome"/>
</dbReference>
<dbReference type="GO" id="GO:0005737">
    <property type="term" value="C:cytoplasm"/>
    <property type="evidence" value="ECO:0007669"/>
    <property type="project" value="UniProtKB-SubCell"/>
</dbReference>
<dbReference type="GO" id="GO:0008666">
    <property type="term" value="F:2,3,4,5-tetrahydropyridine-2,6-dicarboxylate N-succinyltransferase activity"/>
    <property type="evidence" value="ECO:0007669"/>
    <property type="project" value="UniProtKB-UniRule"/>
</dbReference>
<dbReference type="GO" id="GO:0016779">
    <property type="term" value="F:nucleotidyltransferase activity"/>
    <property type="evidence" value="ECO:0007669"/>
    <property type="project" value="TreeGrafter"/>
</dbReference>
<dbReference type="GO" id="GO:0019877">
    <property type="term" value="P:diaminopimelate biosynthetic process"/>
    <property type="evidence" value="ECO:0007669"/>
    <property type="project" value="UniProtKB-UniRule"/>
</dbReference>
<dbReference type="GO" id="GO:0009089">
    <property type="term" value="P:lysine biosynthetic process via diaminopimelate"/>
    <property type="evidence" value="ECO:0007669"/>
    <property type="project" value="UniProtKB-UniRule"/>
</dbReference>
<dbReference type="CDD" id="cd03350">
    <property type="entry name" value="LbH_THP_succinylT"/>
    <property type="match status" value="1"/>
</dbReference>
<dbReference type="Gene3D" id="2.160.10.10">
    <property type="entry name" value="Hexapeptide repeat proteins"/>
    <property type="match status" value="1"/>
</dbReference>
<dbReference type="Gene3D" id="1.10.166.10">
    <property type="entry name" value="Tetrahydrodipicolinate-N-succinyltransferase, N-terminal domain"/>
    <property type="match status" value="1"/>
</dbReference>
<dbReference type="HAMAP" id="MF_00811">
    <property type="entry name" value="DapD"/>
    <property type="match status" value="1"/>
</dbReference>
<dbReference type="InterPro" id="IPR005664">
    <property type="entry name" value="DapD_Trfase_Hexpep_rpt_fam"/>
</dbReference>
<dbReference type="InterPro" id="IPR001451">
    <property type="entry name" value="Hexapep"/>
</dbReference>
<dbReference type="InterPro" id="IPR023180">
    <property type="entry name" value="THP_succinylTrfase_dom1"/>
</dbReference>
<dbReference type="InterPro" id="IPR037133">
    <property type="entry name" value="THP_succinylTrfase_N_sf"/>
</dbReference>
<dbReference type="InterPro" id="IPR011004">
    <property type="entry name" value="Trimer_LpxA-like_sf"/>
</dbReference>
<dbReference type="NCBIfam" id="TIGR00965">
    <property type="entry name" value="dapD"/>
    <property type="match status" value="1"/>
</dbReference>
<dbReference type="NCBIfam" id="NF008808">
    <property type="entry name" value="PRK11830.1"/>
    <property type="match status" value="1"/>
</dbReference>
<dbReference type="PANTHER" id="PTHR19136:SF52">
    <property type="entry name" value="2,3,4,5-TETRAHYDROPYRIDINE-2,6-DICARBOXYLATE N-SUCCINYLTRANSFERASE"/>
    <property type="match status" value="1"/>
</dbReference>
<dbReference type="PANTHER" id="PTHR19136">
    <property type="entry name" value="MOLYBDENUM COFACTOR GUANYLYLTRANSFERASE"/>
    <property type="match status" value="1"/>
</dbReference>
<dbReference type="Pfam" id="PF14602">
    <property type="entry name" value="Hexapep_2"/>
    <property type="match status" value="1"/>
</dbReference>
<dbReference type="Pfam" id="PF14805">
    <property type="entry name" value="THDPS_N_2"/>
    <property type="match status" value="1"/>
</dbReference>
<dbReference type="SUPFAM" id="SSF51161">
    <property type="entry name" value="Trimeric LpxA-like enzymes"/>
    <property type="match status" value="1"/>
</dbReference>
<evidence type="ECO:0000255" key="1">
    <source>
        <dbReference type="HAMAP-Rule" id="MF_00811"/>
    </source>
</evidence>
<protein>
    <recommendedName>
        <fullName evidence="1">2,3,4,5-tetrahydropyridine-2,6-dicarboxylate N-succinyltransferase</fullName>
        <ecNumber evidence="1">2.3.1.117</ecNumber>
    </recommendedName>
    <alternativeName>
        <fullName evidence="1">Tetrahydrodipicolinate N-succinyltransferase</fullName>
        <shortName evidence="1">THDP succinyltransferase</shortName>
        <shortName evidence="1">THP succinyltransferase</shortName>
        <shortName evidence="1">Tetrahydropicolinate succinylase</shortName>
    </alternativeName>
</protein>
<accession>Q4FNF4</accession>
<proteinExistence type="inferred from homology"/>
<sequence>MKEFESIINTAWENKDSINGQSDKSILDAINQTIELVDKGELRVAEKNGNEWVVNQWVKKAIMLSFRTHDMDSLSGPYSSWYDKSHLLKGKTANWTKEDHIKAGFRMVPNSPVRKGSFIGKNAVLMPCFVNIGAYVDEGTMVDTWASVGSCAQIGKNCHISGGAGIGGVLEPMQANPTIIEDNCFIGARSEIVEGVIVGEGSVLSMGVFIGQSTKIVYRETGEVIYGKIPPYSVIVPGSIPSKDGKGPALYCAVIIKQVDEKTRSKTSINDLLRD</sequence>
<keyword id="KW-0012">Acyltransferase</keyword>
<keyword id="KW-0028">Amino-acid biosynthesis</keyword>
<keyword id="KW-0963">Cytoplasm</keyword>
<keyword id="KW-0220">Diaminopimelate biosynthesis</keyword>
<keyword id="KW-0457">Lysine biosynthesis</keyword>
<keyword id="KW-1185">Reference proteome</keyword>
<keyword id="KW-0677">Repeat</keyword>
<keyword id="KW-0808">Transferase</keyword>
<comment type="catalytic activity">
    <reaction evidence="1">
        <text>(S)-2,3,4,5-tetrahydrodipicolinate + succinyl-CoA + H2O = (S)-2-succinylamino-6-oxoheptanedioate + CoA</text>
        <dbReference type="Rhea" id="RHEA:17325"/>
        <dbReference type="ChEBI" id="CHEBI:15377"/>
        <dbReference type="ChEBI" id="CHEBI:15685"/>
        <dbReference type="ChEBI" id="CHEBI:16845"/>
        <dbReference type="ChEBI" id="CHEBI:57287"/>
        <dbReference type="ChEBI" id="CHEBI:57292"/>
        <dbReference type="EC" id="2.3.1.117"/>
    </reaction>
</comment>
<comment type="pathway">
    <text evidence="1">Amino-acid biosynthesis; L-lysine biosynthesis via DAP pathway; LL-2,6-diaminopimelate from (S)-tetrahydrodipicolinate (succinylase route): step 1/3.</text>
</comment>
<comment type="subunit">
    <text evidence="1">Homotrimer.</text>
</comment>
<comment type="subcellular location">
    <subcellularLocation>
        <location evidence="1">Cytoplasm</location>
    </subcellularLocation>
</comment>
<comment type="similarity">
    <text evidence="1">Belongs to the transferase hexapeptide repeat family.</text>
</comment>
<organism>
    <name type="scientific">Pelagibacter ubique (strain HTCC1062)</name>
    <dbReference type="NCBI Taxonomy" id="335992"/>
    <lineage>
        <taxon>Bacteria</taxon>
        <taxon>Pseudomonadati</taxon>
        <taxon>Pseudomonadota</taxon>
        <taxon>Alphaproteobacteria</taxon>
        <taxon>Candidatus Pelagibacterales</taxon>
        <taxon>Candidatus Pelagibacteraceae</taxon>
        <taxon>Candidatus Pelagibacter</taxon>
    </lineage>
</organism>
<gene>
    <name evidence="1" type="primary">dapD</name>
    <name type="ordered locus">SAR11_0463</name>
</gene>